<comment type="function">
    <text evidence="1">Involved in the biosynthesis of the chorismate, which leads to the biosynthesis of aromatic amino acids. Catalyzes the reversible NADPH linked reduction of 3-dehydroshikimate (DHSA) to yield shikimate (SA).</text>
</comment>
<comment type="catalytic activity">
    <reaction evidence="1">
        <text>shikimate + NADP(+) = 3-dehydroshikimate + NADPH + H(+)</text>
        <dbReference type="Rhea" id="RHEA:17737"/>
        <dbReference type="ChEBI" id="CHEBI:15378"/>
        <dbReference type="ChEBI" id="CHEBI:16630"/>
        <dbReference type="ChEBI" id="CHEBI:36208"/>
        <dbReference type="ChEBI" id="CHEBI:57783"/>
        <dbReference type="ChEBI" id="CHEBI:58349"/>
        <dbReference type="EC" id="1.1.1.25"/>
    </reaction>
</comment>
<comment type="pathway">
    <text evidence="1">Metabolic intermediate biosynthesis; chorismate biosynthesis; chorismate from D-erythrose 4-phosphate and phosphoenolpyruvate: step 4/7.</text>
</comment>
<comment type="subunit">
    <text evidence="1">Homodimer.</text>
</comment>
<comment type="similarity">
    <text evidence="1">Belongs to the shikimate dehydrogenase family.</text>
</comment>
<gene>
    <name evidence="1" type="primary">aroE</name>
    <name type="ordered locus">XF_0624</name>
</gene>
<keyword id="KW-0028">Amino-acid biosynthesis</keyword>
<keyword id="KW-0057">Aromatic amino acid biosynthesis</keyword>
<keyword id="KW-0521">NADP</keyword>
<keyword id="KW-0560">Oxidoreductase</keyword>
<proteinExistence type="inferred from homology"/>
<dbReference type="EC" id="1.1.1.25" evidence="1"/>
<dbReference type="EMBL" id="AE003849">
    <property type="protein sequence ID" value="AAF83434.1"/>
    <property type="molecule type" value="Genomic_DNA"/>
</dbReference>
<dbReference type="PIR" id="F82781">
    <property type="entry name" value="F82781"/>
</dbReference>
<dbReference type="RefSeq" id="WP_010893148.1">
    <property type="nucleotide sequence ID" value="NC_002488.3"/>
</dbReference>
<dbReference type="SMR" id="Q9PFN3"/>
<dbReference type="STRING" id="160492.XF_0624"/>
<dbReference type="KEGG" id="xfa:XF_0624"/>
<dbReference type="eggNOG" id="COG0169">
    <property type="taxonomic scope" value="Bacteria"/>
</dbReference>
<dbReference type="HOGENOM" id="CLU_044063_2_1_6"/>
<dbReference type="UniPathway" id="UPA00053">
    <property type="reaction ID" value="UER00087"/>
</dbReference>
<dbReference type="Proteomes" id="UP000000812">
    <property type="component" value="Chromosome"/>
</dbReference>
<dbReference type="GO" id="GO:0005829">
    <property type="term" value="C:cytosol"/>
    <property type="evidence" value="ECO:0007669"/>
    <property type="project" value="TreeGrafter"/>
</dbReference>
<dbReference type="GO" id="GO:0050661">
    <property type="term" value="F:NADP binding"/>
    <property type="evidence" value="ECO:0007669"/>
    <property type="project" value="InterPro"/>
</dbReference>
<dbReference type="GO" id="GO:0004764">
    <property type="term" value="F:shikimate 3-dehydrogenase (NADP+) activity"/>
    <property type="evidence" value="ECO:0007669"/>
    <property type="project" value="UniProtKB-UniRule"/>
</dbReference>
<dbReference type="GO" id="GO:0008652">
    <property type="term" value="P:amino acid biosynthetic process"/>
    <property type="evidence" value="ECO:0007669"/>
    <property type="project" value="UniProtKB-KW"/>
</dbReference>
<dbReference type="GO" id="GO:0009073">
    <property type="term" value="P:aromatic amino acid family biosynthetic process"/>
    <property type="evidence" value="ECO:0007669"/>
    <property type="project" value="UniProtKB-KW"/>
</dbReference>
<dbReference type="GO" id="GO:0009423">
    <property type="term" value="P:chorismate biosynthetic process"/>
    <property type="evidence" value="ECO:0007669"/>
    <property type="project" value="UniProtKB-UniRule"/>
</dbReference>
<dbReference type="GO" id="GO:0019632">
    <property type="term" value="P:shikimate metabolic process"/>
    <property type="evidence" value="ECO:0007669"/>
    <property type="project" value="InterPro"/>
</dbReference>
<dbReference type="CDD" id="cd01065">
    <property type="entry name" value="NAD_bind_Shikimate_DH"/>
    <property type="match status" value="1"/>
</dbReference>
<dbReference type="FunFam" id="3.40.50.10860:FF:000006">
    <property type="entry name" value="Shikimate dehydrogenase (NADP(+))"/>
    <property type="match status" value="1"/>
</dbReference>
<dbReference type="Gene3D" id="3.40.50.10860">
    <property type="entry name" value="Leucine Dehydrogenase, chain A, domain 1"/>
    <property type="match status" value="1"/>
</dbReference>
<dbReference type="Gene3D" id="3.40.50.720">
    <property type="entry name" value="NAD(P)-binding Rossmann-like Domain"/>
    <property type="match status" value="1"/>
</dbReference>
<dbReference type="HAMAP" id="MF_00222">
    <property type="entry name" value="Shikimate_DH_AroE"/>
    <property type="match status" value="1"/>
</dbReference>
<dbReference type="InterPro" id="IPR046346">
    <property type="entry name" value="Aminoacid_DH-like_N_sf"/>
</dbReference>
<dbReference type="InterPro" id="IPR036291">
    <property type="entry name" value="NAD(P)-bd_dom_sf"/>
</dbReference>
<dbReference type="InterPro" id="IPR041121">
    <property type="entry name" value="SDH_C"/>
</dbReference>
<dbReference type="InterPro" id="IPR011342">
    <property type="entry name" value="Shikimate_DH"/>
</dbReference>
<dbReference type="InterPro" id="IPR013708">
    <property type="entry name" value="Shikimate_DH-bd_N"/>
</dbReference>
<dbReference type="InterPro" id="IPR022893">
    <property type="entry name" value="Shikimate_DH_fam"/>
</dbReference>
<dbReference type="InterPro" id="IPR006151">
    <property type="entry name" value="Shikm_DH/Glu-tRNA_Rdtase"/>
</dbReference>
<dbReference type="NCBIfam" id="TIGR00507">
    <property type="entry name" value="aroE"/>
    <property type="match status" value="1"/>
</dbReference>
<dbReference type="NCBIfam" id="NF001310">
    <property type="entry name" value="PRK00258.1-2"/>
    <property type="match status" value="1"/>
</dbReference>
<dbReference type="PANTHER" id="PTHR21089:SF1">
    <property type="entry name" value="BIFUNCTIONAL 3-DEHYDROQUINATE DEHYDRATASE_SHIKIMATE DEHYDROGENASE, CHLOROPLASTIC"/>
    <property type="match status" value="1"/>
</dbReference>
<dbReference type="PANTHER" id="PTHR21089">
    <property type="entry name" value="SHIKIMATE DEHYDROGENASE"/>
    <property type="match status" value="1"/>
</dbReference>
<dbReference type="Pfam" id="PF18317">
    <property type="entry name" value="SDH_C"/>
    <property type="match status" value="1"/>
</dbReference>
<dbReference type="Pfam" id="PF01488">
    <property type="entry name" value="Shikimate_DH"/>
    <property type="match status" value="1"/>
</dbReference>
<dbReference type="Pfam" id="PF08501">
    <property type="entry name" value="Shikimate_dh_N"/>
    <property type="match status" value="1"/>
</dbReference>
<dbReference type="SUPFAM" id="SSF53223">
    <property type="entry name" value="Aminoacid dehydrogenase-like, N-terminal domain"/>
    <property type="match status" value="1"/>
</dbReference>
<dbReference type="SUPFAM" id="SSF51735">
    <property type="entry name" value="NAD(P)-binding Rossmann-fold domains"/>
    <property type="match status" value="1"/>
</dbReference>
<reference key="1">
    <citation type="journal article" date="2000" name="Nature">
        <title>The genome sequence of the plant pathogen Xylella fastidiosa.</title>
        <authorList>
            <person name="Simpson A.J.G."/>
            <person name="Reinach F.C."/>
            <person name="Arruda P."/>
            <person name="Abreu F.A."/>
            <person name="Acencio M."/>
            <person name="Alvarenga R."/>
            <person name="Alves L.M.C."/>
            <person name="Araya J.E."/>
            <person name="Baia G.S."/>
            <person name="Baptista C.S."/>
            <person name="Barros M.H."/>
            <person name="Bonaccorsi E.D."/>
            <person name="Bordin S."/>
            <person name="Bove J.M."/>
            <person name="Briones M.R.S."/>
            <person name="Bueno M.R.P."/>
            <person name="Camargo A.A."/>
            <person name="Camargo L.E.A."/>
            <person name="Carraro D.M."/>
            <person name="Carrer H."/>
            <person name="Colauto N.B."/>
            <person name="Colombo C."/>
            <person name="Costa F.F."/>
            <person name="Costa M.C.R."/>
            <person name="Costa-Neto C.M."/>
            <person name="Coutinho L.L."/>
            <person name="Cristofani M."/>
            <person name="Dias-Neto E."/>
            <person name="Docena C."/>
            <person name="El-Dorry H."/>
            <person name="Facincani A.P."/>
            <person name="Ferreira A.J.S."/>
            <person name="Ferreira V.C.A."/>
            <person name="Ferro J.A."/>
            <person name="Fraga J.S."/>
            <person name="Franca S.C."/>
            <person name="Franco M.C."/>
            <person name="Frohme M."/>
            <person name="Furlan L.R."/>
            <person name="Garnier M."/>
            <person name="Goldman G.H."/>
            <person name="Goldman M.H.S."/>
            <person name="Gomes S.L."/>
            <person name="Gruber A."/>
            <person name="Ho P.L."/>
            <person name="Hoheisel J.D."/>
            <person name="Junqueira M.L."/>
            <person name="Kemper E.L."/>
            <person name="Kitajima J.P."/>
            <person name="Krieger J.E."/>
            <person name="Kuramae E.E."/>
            <person name="Laigret F."/>
            <person name="Lambais M.R."/>
            <person name="Leite L.C.C."/>
            <person name="Lemos E.G.M."/>
            <person name="Lemos M.V.F."/>
            <person name="Lopes S.A."/>
            <person name="Lopes C.R."/>
            <person name="Machado J.A."/>
            <person name="Machado M.A."/>
            <person name="Madeira A.M.B.N."/>
            <person name="Madeira H.M.F."/>
            <person name="Marino C.L."/>
            <person name="Marques M.V."/>
            <person name="Martins E.A.L."/>
            <person name="Martins E.M.F."/>
            <person name="Matsukuma A.Y."/>
            <person name="Menck C.F.M."/>
            <person name="Miracca E.C."/>
            <person name="Miyaki C.Y."/>
            <person name="Monteiro-Vitorello C.B."/>
            <person name="Moon D.H."/>
            <person name="Nagai M.A."/>
            <person name="Nascimento A.L.T.O."/>
            <person name="Netto L.E.S."/>
            <person name="Nhani A. Jr."/>
            <person name="Nobrega F.G."/>
            <person name="Nunes L.R."/>
            <person name="Oliveira M.A."/>
            <person name="de Oliveira M.C."/>
            <person name="de Oliveira R.C."/>
            <person name="Palmieri D.A."/>
            <person name="Paris A."/>
            <person name="Peixoto B.R."/>
            <person name="Pereira G.A.G."/>
            <person name="Pereira H.A. Jr."/>
            <person name="Pesquero J.B."/>
            <person name="Quaggio R.B."/>
            <person name="Roberto P.G."/>
            <person name="Rodrigues V."/>
            <person name="de Rosa A.J.M."/>
            <person name="de Rosa V.E. Jr."/>
            <person name="de Sa R.G."/>
            <person name="Santelli R.V."/>
            <person name="Sawasaki H.E."/>
            <person name="da Silva A.C.R."/>
            <person name="da Silva A.M."/>
            <person name="da Silva F.R."/>
            <person name="Silva W.A. Jr."/>
            <person name="da Silveira J.F."/>
            <person name="Silvestri M.L.Z."/>
            <person name="Siqueira W.J."/>
            <person name="de Souza A.A."/>
            <person name="de Souza A.P."/>
            <person name="Terenzi M.F."/>
            <person name="Truffi D."/>
            <person name="Tsai S.M."/>
            <person name="Tsuhako M.H."/>
            <person name="Vallada H."/>
            <person name="Van Sluys M.A."/>
            <person name="Verjovski-Almeida S."/>
            <person name="Vettore A.L."/>
            <person name="Zago M.A."/>
            <person name="Zatz M."/>
            <person name="Meidanis J."/>
            <person name="Setubal J.C."/>
        </authorList>
    </citation>
    <scope>NUCLEOTIDE SEQUENCE [LARGE SCALE GENOMIC DNA]</scope>
    <source>
        <strain>9a5c</strain>
    </source>
</reference>
<protein>
    <recommendedName>
        <fullName evidence="1">Shikimate dehydrogenase (NADP(+))</fullName>
        <shortName evidence="1">SDH</shortName>
        <ecNumber evidence="1">1.1.1.25</ecNumber>
    </recommendedName>
</protein>
<evidence type="ECO:0000255" key="1">
    <source>
        <dbReference type="HAMAP-Rule" id="MF_00222"/>
    </source>
</evidence>
<accession>Q9PFN3</accession>
<organism>
    <name type="scientific">Xylella fastidiosa (strain 9a5c)</name>
    <dbReference type="NCBI Taxonomy" id="160492"/>
    <lineage>
        <taxon>Bacteria</taxon>
        <taxon>Pseudomonadati</taxon>
        <taxon>Pseudomonadota</taxon>
        <taxon>Gammaproteobacteria</taxon>
        <taxon>Lysobacterales</taxon>
        <taxon>Lysobacteraceae</taxon>
        <taxon>Xylella</taxon>
    </lineage>
</organism>
<feature type="chain" id="PRO_0000136054" description="Shikimate dehydrogenase (NADP(+))">
    <location>
        <begin position="1"/>
        <end position="282"/>
    </location>
</feature>
<feature type="active site" description="Proton acceptor" evidence="1">
    <location>
        <position position="67"/>
    </location>
</feature>
<feature type="binding site" evidence="1">
    <location>
        <begin position="16"/>
        <end position="18"/>
    </location>
    <ligand>
        <name>shikimate</name>
        <dbReference type="ChEBI" id="CHEBI:36208"/>
    </ligand>
</feature>
<feature type="binding site" evidence="1">
    <location>
        <position position="63"/>
    </location>
    <ligand>
        <name>shikimate</name>
        <dbReference type="ChEBI" id="CHEBI:36208"/>
    </ligand>
</feature>
<feature type="binding site" evidence="1">
    <location>
        <position position="88"/>
    </location>
    <ligand>
        <name>shikimate</name>
        <dbReference type="ChEBI" id="CHEBI:36208"/>
    </ligand>
</feature>
<feature type="binding site" evidence="1">
    <location>
        <position position="103"/>
    </location>
    <ligand>
        <name>shikimate</name>
        <dbReference type="ChEBI" id="CHEBI:36208"/>
    </ligand>
</feature>
<feature type="binding site" evidence="1">
    <location>
        <begin position="128"/>
        <end position="132"/>
    </location>
    <ligand>
        <name>NADP(+)</name>
        <dbReference type="ChEBI" id="CHEBI:58349"/>
    </ligand>
</feature>
<feature type="binding site" evidence="1">
    <location>
        <position position="243"/>
    </location>
    <ligand>
        <name>NADP(+)</name>
        <dbReference type="ChEBI" id="CHEBI:58349"/>
    </ligand>
</feature>
<sequence>MPVSRFAVFGHPIAHSLSPRIHTEFGRQMGVALNYLAFDVAPDAFRVSLERFVAEGGCGANVTLPLKEAAFEVCTTLSARARRAGAVNTLSRVDGVWHGENTDGTGLVRNLTERHGLDLRGRRALLLGAGGAARGVAPALLDAGITEMVIVNRSPERADMLCDALGEPGRVSARYWGDLGDLGNFELIVNATSIGNTSDMRTFSLPRSLLDSMTAAVDLNYGSAAVPFLAWAHAVETRYVIDGLGMLVEQAAESFSLWHGRRPDTDPVYTVLHSEYGAPGRS</sequence>
<name>AROE_XYLFA</name>